<reference key="1">
    <citation type="journal article" date="2006" name="Proc. Natl. Acad. Sci. U.S.A.">
        <title>Evidence that bovine forebrain embryonic zinc finger-like gene influences immune response associated with mastitis resistance.</title>
        <authorList>
            <person name="Sugimoto M."/>
            <person name="Fujikawa A."/>
            <person name="Womack J.E."/>
            <person name="Sugimoto Y."/>
        </authorList>
    </citation>
    <scope>NUCLEOTIDE SEQUENCE [MRNA]</scope>
</reference>
<reference key="2">
    <citation type="submission" date="2006-02" db="EMBL/GenBank/DDBJ databases">
        <authorList>
            <consortium name="NIH - Mammalian Gene Collection (MGC) project"/>
        </authorList>
    </citation>
    <scope>NUCLEOTIDE SEQUENCE [LARGE SCALE MRNA]</scope>
    <source>
        <strain>Hereford</strain>
        <tissue>Uterus</tissue>
    </source>
</reference>
<sequence length="128" mass="14631">MTSLFTQEIRLSKRHEKIVSQRLMLLQQMENKPEDQNKGRASQTQAAKAALQRNVSLLKDIEAAEKSLQTRMYPALPPEVAALETLYWASVEEYIPKWEQFLLGRAPYPACSENGNEAEDTIPKRAQQ</sequence>
<dbReference type="EMBL" id="DQ335871">
    <property type="protein sequence ID" value="ABC61316.1"/>
    <property type="molecule type" value="mRNA"/>
</dbReference>
<dbReference type="EMBL" id="BC113216">
    <property type="protein sequence ID" value="AAI13217.1"/>
    <property type="molecule type" value="mRNA"/>
</dbReference>
<dbReference type="RefSeq" id="NP_001039975.1">
    <property type="nucleotide sequence ID" value="NM_001046510.1"/>
</dbReference>
<dbReference type="RefSeq" id="XP_005222752.1">
    <property type="nucleotide sequence ID" value="XM_005222695.3"/>
</dbReference>
<dbReference type="SMR" id="Q29S20"/>
<dbReference type="FunCoup" id="Q29S20">
    <property type="interactions" value="367"/>
</dbReference>
<dbReference type="STRING" id="9913.ENSBTAP00000002457"/>
<dbReference type="PaxDb" id="9913-ENSBTAP00000002457"/>
<dbReference type="Ensembl" id="ENSBTAT00000002457.7">
    <property type="protein sequence ID" value="ENSBTAP00000002457.5"/>
    <property type="gene ID" value="ENSBTAG00000001889.7"/>
</dbReference>
<dbReference type="GeneID" id="613635"/>
<dbReference type="KEGG" id="bta:613635"/>
<dbReference type="CTD" id="613635"/>
<dbReference type="VEuPathDB" id="HostDB:ENSBTAG00000001889"/>
<dbReference type="VGNC" id="VGNC:49182">
    <property type="gene designation" value="CEP15"/>
</dbReference>
<dbReference type="eggNOG" id="ENOG502S7A9">
    <property type="taxonomic scope" value="Eukaryota"/>
</dbReference>
<dbReference type="GeneTree" id="ENSGT00390000005214"/>
<dbReference type="HOGENOM" id="CLU_133336_0_0_1"/>
<dbReference type="InParanoid" id="Q29S20"/>
<dbReference type="OMA" id="KEYIPKW"/>
<dbReference type="OrthoDB" id="9871079at2759"/>
<dbReference type="TreeFam" id="TF335879"/>
<dbReference type="Proteomes" id="UP000009136">
    <property type="component" value="Chromosome 22"/>
</dbReference>
<dbReference type="Bgee" id="ENSBTAG00000001889">
    <property type="expression patterns" value="Expressed in spermatid and 103 other cell types or tissues"/>
</dbReference>
<dbReference type="GO" id="GO:0005929">
    <property type="term" value="C:cilium"/>
    <property type="evidence" value="ECO:0007669"/>
    <property type="project" value="UniProtKB-SubCell"/>
</dbReference>
<dbReference type="InterPro" id="IPR028006">
    <property type="entry name" value="CEP15-like"/>
</dbReference>
<dbReference type="PANTHER" id="PTHR14286:SF2">
    <property type="entry name" value="CENTROSOMAL PROTEIN 15 KDA"/>
    <property type="match status" value="1"/>
</dbReference>
<dbReference type="PANTHER" id="PTHR14286">
    <property type="entry name" value="GENE, 49355-RELATED"/>
    <property type="match status" value="1"/>
</dbReference>
<dbReference type="Pfam" id="PF15134">
    <property type="entry name" value="CEP15-like"/>
    <property type="match status" value="1"/>
</dbReference>
<comment type="function">
    <text evidence="2">May play a role in ciliary assembly.</text>
</comment>
<comment type="subcellular location">
    <subcellularLocation>
        <location evidence="2">Cell projection</location>
        <location evidence="2">Cilium</location>
    </subcellularLocation>
    <text evidence="2">Locates at ciliary distal appendages.</text>
</comment>
<gene>
    <name type="primary">CEP15</name>
</gene>
<evidence type="ECO:0000250" key="1">
    <source>
        <dbReference type="UniProtKB" id="Q8BGD0"/>
    </source>
</evidence>
<evidence type="ECO:0000250" key="2">
    <source>
        <dbReference type="UniProtKB" id="Q9HBI5"/>
    </source>
</evidence>
<evidence type="ECO:0000305" key="3"/>
<accession>Q29S20</accession>
<organism>
    <name type="scientific">Bos taurus</name>
    <name type="common">Bovine</name>
    <dbReference type="NCBI Taxonomy" id="9913"/>
    <lineage>
        <taxon>Eukaryota</taxon>
        <taxon>Metazoa</taxon>
        <taxon>Chordata</taxon>
        <taxon>Craniata</taxon>
        <taxon>Vertebrata</taxon>
        <taxon>Euteleostomi</taxon>
        <taxon>Mammalia</taxon>
        <taxon>Eutheria</taxon>
        <taxon>Laurasiatheria</taxon>
        <taxon>Artiodactyla</taxon>
        <taxon>Ruminantia</taxon>
        <taxon>Pecora</taxon>
        <taxon>Bovidae</taxon>
        <taxon>Bovinae</taxon>
        <taxon>Bos</taxon>
    </lineage>
</organism>
<feature type="chain" id="PRO_0000265094" description="Centrosomal protein 15">
    <location>
        <begin position="1"/>
        <end position="128"/>
    </location>
</feature>
<keyword id="KW-0966">Cell projection</keyword>
<keyword id="KW-1185">Reference proteome</keyword>
<protein>
    <recommendedName>
        <fullName evidence="1">Centrosomal protein 15</fullName>
    </recommendedName>
    <alternativeName>
        <fullName evidence="3">Centrosomal protein 15 kDa</fullName>
    </alternativeName>
    <alternativeName>
        <fullName>Uncharacterized protein C3orf14 homolog</fullName>
    </alternativeName>
</protein>
<proteinExistence type="evidence at transcript level"/>
<name>CEP15_BOVIN</name>